<gene>
    <name evidence="1" type="primary">rpmC</name>
    <name type="ordered locus">CT2181</name>
</gene>
<reference key="1">
    <citation type="journal article" date="2002" name="Proc. Natl. Acad. Sci. U.S.A.">
        <title>The complete genome sequence of Chlorobium tepidum TLS, a photosynthetic, anaerobic, green-sulfur bacterium.</title>
        <authorList>
            <person name="Eisen J.A."/>
            <person name="Nelson K.E."/>
            <person name="Paulsen I.T."/>
            <person name="Heidelberg J.F."/>
            <person name="Wu M."/>
            <person name="Dodson R.J."/>
            <person name="DeBoy R.T."/>
            <person name="Gwinn M.L."/>
            <person name="Nelson W.C."/>
            <person name="Haft D.H."/>
            <person name="Hickey E.K."/>
            <person name="Peterson J.D."/>
            <person name="Durkin A.S."/>
            <person name="Kolonay J.F."/>
            <person name="Yang F."/>
            <person name="Holt I.E."/>
            <person name="Umayam L.A."/>
            <person name="Mason T.M."/>
            <person name="Brenner M."/>
            <person name="Shea T.P."/>
            <person name="Parksey D.S."/>
            <person name="Nierman W.C."/>
            <person name="Feldblyum T.V."/>
            <person name="Hansen C.L."/>
            <person name="Craven M.B."/>
            <person name="Radune D."/>
            <person name="Vamathevan J.J."/>
            <person name="Khouri H.M."/>
            <person name="White O."/>
            <person name="Gruber T.M."/>
            <person name="Ketchum K.A."/>
            <person name="Venter J.C."/>
            <person name="Tettelin H."/>
            <person name="Bryant D.A."/>
            <person name="Fraser C.M."/>
        </authorList>
    </citation>
    <scope>NUCLEOTIDE SEQUENCE [LARGE SCALE GENOMIC DNA]</scope>
    <source>
        <strain>ATCC 49652 / DSM 12025 / NBRC 103806 / TLS</strain>
    </source>
</reference>
<organism>
    <name type="scientific">Chlorobaculum tepidum (strain ATCC 49652 / DSM 12025 / NBRC 103806 / TLS)</name>
    <name type="common">Chlorobium tepidum</name>
    <dbReference type="NCBI Taxonomy" id="194439"/>
    <lineage>
        <taxon>Bacteria</taxon>
        <taxon>Pseudomonadati</taxon>
        <taxon>Chlorobiota</taxon>
        <taxon>Chlorobiia</taxon>
        <taxon>Chlorobiales</taxon>
        <taxon>Chlorobiaceae</taxon>
        <taxon>Chlorobaculum</taxon>
    </lineage>
</organism>
<evidence type="ECO:0000255" key="1">
    <source>
        <dbReference type="HAMAP-Rule" id="MF_00374"/>
    </source>
</evidence>
<evidence type="ECO:0000305" key="2"/>
<sequence length="68" mass="8083">MKNYEIAAMDKKELLSKIKELENRLADLNFYQAIEPAQNPMVFRNLKRDIARMKTRLTQIDRQEKSNA</sequence>
<name>RL29_CHLTE</name>
<comment type="similarity">
    <text evidence="1">Belongs to the universal ribosomal protein uL29 family.</text>
</comment>
<feature type="chain" id="PRO_0000130374" description="Large ribosomal subunit protein uL29">
    <location>
        <begin position="1"/>
        <end position="68"/>
    </location>
</feature>
<proteinExistence type="inferred from homology"/>
<protein>
    <recommendedName>
        <fullName evidence="1">Large ribosomal subunit protein uL29</fullName>
    </recommendedName>
    <alternativeName>
        <fullName evidence="2">50S ribosomal protein L29</fullName>
    </alternativeName>
</protein>
<dbReference type="EMBL" id="AE006470">
    <property type="protein sequence ID" value="AAM73397.1"/>
    <property type="molecule type" value="Genomic_DNA"/>
</dbReference>
<dbReference type="RefSeq" id="NP_663055.1">
    <property type="nucleotide sequence ID" value="NC_002932.3"/>
</dbReference>
<dbReference type="RefSeq" id="WP_010933834.1">
    <property type="nucleotide sequence ID" value="NC_002932.3"/>
</dbReference>
<dbReference type="SMR" id="Q8KAI0"/>
<dbReference type="STRING" id="194439.CT2181"/>
<dbReference type="EnsemblBacteria" id="AAM73397">
    <property type="protein sequence ID" value="AAM73397"/>
    <property type="gene ID" value="CT2181"/>
</dbReference>
<dbReference type="KEGG" id="cte:CT2181"/>
<dbReference type="PATRIC" id="fig|194439.7.peg.1980"/>
<dbReference type="eggNOG" id="COG0255">
    <property type="taxonomic scope" value="Bacteria"/>
</dbReference>
<dbReference type="HOGENOM" id="CLU_158491_5_1_10"/>
<dbReference type="OrthoDB" id="5296761at2"/>
<dbReference type="Proteomes" id="UP000001007">
    <property type="component" value="Chromosome"/>
</dbReference>
<dbReference type="GO" id="GO:1990904">
    <property type="term" value="C:ribonucleoprotein complex"/>
    <property type="evidence" value="ECO:0007669"/>
    <property type="project" value="UniProtKB-KW"/>
</dbReference>
<dbReference type="GO" id="GO:0005840">
    <property type="term" value="C:ribosome"/>
    <property type="evidence" value="ECO:0007669"/>
    <property type="project" value="UniProtKB-KW"/>
</dbReference>
<dbReference type="GO" id="GO:0003735">
    <property type="term" value="F:structural constituent of ribosome"/>
    <property type="evidence" value="ECO:0007669"/>
    <property type="project" value="InterPro"/>
</dbReference>
<dbReference type="GO" id="GO:0006412">
    <property type="term" value="P:translation"/>
    <property type="evidence" value="ECO:0007669"/>
    <property type="project" value="UniProtKB-UniRule"/>
</dbReference>
<dbReference type="CDD" id="cd00427">
    <property type="entry name" value="Ribosomal_L29_HIP"/>
    <property type="match status" value="1"/>
</dbReference>
<dbReference type="Gene3D" id="1.10.287.310">
    <property type="match status" value="1"/>
</dbReference>
<dbReference type="HAMAP" id="MF_00374">
    <property type="entry name" value="Ribosomal_uL29"/>
    <property type="match status" value="1"/>
</dbReference>
<dbReference type="InterPro" id="IPR001854">
    <property type="entry name" value="Ribosomal_uL29"/>
</dbReference>
<dbReference type="InterPro" id="IPR018254">
    <property type="entry name" value="Ribosomal_uL29_CS"/>
</dbReference>
<dbReference type="InterPro" id="IPR036049">
    <property type="entry name" value="Ribosomal_uL29_sf"/>
</dbReference>
<dbReference type="NCBIfam" id="TIGR00012">
    <property type="entry name" value="L29"/>
    <property type="match status" value="1"/>
</dbReference>
<dbReference type="Pfam" id="PF00831">
    <property type="entry name" value="Ribosomal_L29"/>
    <property type="match status" value="1"/>
</dbReference>
<dbReference type="SUPFAM" id="SSF46561">
    <property type="entry name" value="Ribosomal protein L29 (L29p)"/>
    <property type="match status" value="1"/>
</dbReference>
<dbReference type="PROSITE" id="PS00579">
    <property type="entry name" value="RIBOSOMAL_L29"/>
    <property type="match status" value="1"/>
</dbReference>
<keyword id="KW-1185">Reference proteome</keyword>
<keyword id="KW-0687">Ribonucleoprotein</keyword>
<keyword id="KW-0689">Ribosomal protein</keyword>
<accession>Q8KAI0</accession>